<proteinExistence type="evidence at protein level"/>
<accession>P32447</accession>
<accession>D6VW69</accession>
<reference key="1">
    <citation type="journal article" date="1997" name="Yeast">
        <title>Two new S-phase-specific genes from Saccharomyces cerevisiae.</title>
        <authorList>
            <person name="Le S."/>
            <person name="Davis C."/>
            <person name="Konopka J.B."/>
            <person name="Sternglanz R."/>
        </authorList>
    </citation>
    <scope>NUCLEOTIDE SEQUENCE [GENOMIC DNA]</scope>
    <scope>DEVELOPMENTAL STAGE</scope>
</reference>
<reference key="2">
    <citation type="journal article" date="1996" name="Yeast">
        <title>Sequencing analysis of a 40.2 kb fragment of yeast chromosome X reveals 19 open reading frames including URA2 (5' end), TRK1, PBS2, SPT10, GCD14, RPE1, PHO86, NCA3, ASF1, CCT7, GZF3, two tRNA genes, three remnant delta elements and a Ty4 transposon.</title>
        <authorList>
            <person name="Cziepluch C."/>
            <person name="Kordes E."/>
            <person name="Pujol A."/>
            <person name="Jauniaux J.-C."/>
        </authorList>
    </citation>
    <scope>NUCLEOTIDE SEQUENCE [GENOMIC DNA]</scope>
    <source>
        <strain>ATCC 96604 / S288c / FY1679</strain>
    </source>
</reference>
<reference key="3">
    <citation type="journal article" date="1996" name="EMBO J.">
        <title>Complete nucleotide sequence of Saccharomyces cerevisiae chromosome X.</title>
        <authorList>
            <person name="Galibert F."/>
            <person name="Alexandraki D."/>
            <person name="Baur A."/>
            <person name="Boles E."/>
            <person name="Chalwatzis N."/>
            <person name="Chuat J.-C."/>
            <person name="Coster F."/>
            <person name="Cziepluch C."/>
            <person name="de Haan M."/>
            <person name="Domdey H."/>
            <person name="Durand P."/>
            <person name="Entian K.-D."/>
            <person name="Gatius M."/>
            <person name="Goffeau A."/>
            <person name="Grivell L.A."/>
            <person name="Hennemann A."/>
            <person name="Herbert C.J."/>
            <person name="Heumann K."/>
            <person name="Hilger F."/>
            <person name="Hollenberg C.P."/>
            <person name="Huang M.-E."/>
            <person name="Jacq C."/>
            <person name="Jauniaux J.-C."/>
            <person name="Katsoulou C."/>
            <person name="Kirchrath L."/>
            <person name="Kleine K."/>
            <person name="Kordes E."/>
            <person name="Koetter P."/>
            <person name="Liebl S."/>
            <person name="Louis E.J."/>
            <person name="Manus V."/>
            <person name="Mewes H.-W."/>
            <person name="Miosga T."/>
            <person name="Obermaier B."/>
            <person name="Perea J."/>
            <person name="Pohl T.M."/>
            <person name="Portetelle D."/>
            <person name="Pujol A."/>
            <person name="Purnelle B."/>
            <person name="Ramezani Rad M."/>
            <person name="Rasmussen S.W."/>
            <person name="Rose M."/>
            <person name="Rossau R."/>
            <person name="Schaaff-Gerstenschlaeger I."/>
            <person name="Smits P.H.M."/>
            <person name="Scarcez T."/>
            <person name="Soriano N."/>
            <person name="To Van D."/>
            <person name="Tzermia M."/>
            <person name="Van Broekhoven A."/>
            <person name="Vandenbol M."/>
            <person name="Wedler H."/>
            <person name="von Wettstein D."/>
            <person name="Wambutt R."/>
            <person name="Zagulski M."/>
            <person name="Zollner A."/>
            <person name="Karpfinger-Hartl L."/>
        </authorList>
    </citation>
    <scope>NUCLEOTIDE SEQUENCE [LARGE SCALE GENOMIC DNA]</scope>
    <source>
        <strain>ATCC 204508 / S288c</strain>
    </source>
</reference>
<reference key="4">
    <citation type="journal article" date="2014" name="G3 (Bethesda)">
        <title>The reference genome sequence of Saccharomyces cerevisiae: Then and now.</title>
        <authorList>
            <person name="Engel S.R."/>
            <person name="Dietrich F.S."/>
            <person name="Fisk D.G."/>
            <person name="Binkley G."/>
            <person name="Balakrishnan R."/>
            <person name="Costanzo M.C."/>
            <person name="Dwight S.S."/>
            <person name="Hitz B.C."/>
            <person name="Karra K."/>
            <person name="Nash R.S."/>
            <person name="Weng S."/>
            <person name="Wong E.D."/>
            <person name="Lloyd P."/>
            <person name="Skrzypek M.S."/>
            <person name="Miyasato S.R."/>
            <person name="Simison M."/>
            <person name="Cherry J.M."/>
        </authorList>
    </citation>
    <scope>GENOME REANNOTATION</scope>
    <source>
        <strain>ATCC 204508 / S288c</strain>
    </source>
</reference>
<reference key="5">
    <citation type="journal article" date="2007" name="Genome Res.">
        <title>Approaching a complete repository of sequence-verified protein-encoding clones for Saccharomyces cerevisiae.</title>
        <authorList>
            <person name="Hu Y."/>
            <person name="Rolfs A."/>
            <person name="Bhullar B."/>
            <person name="Murthy T.V.S."/>
            <person name="Zhu C."/>
            <person name="Berger M.F."/>
            <person name="Camargo A.A."/>
            <person name="Kelley F."/>
            <person name="McCarron S."/>
            <person name="Jepson D."/>
            <person name="Richardson A."/>
            <person name="Raphael J."/>
            <person name="Moreira D."/>
            <person name="Taycher E."/>
            <person name="Zuo D."/>
            <person name="Mohr S."/>
            <person name="Kane M.F."/>
            <person name="Williamson J."/>
            <person name="Simpson A.J.G."/>
            <person name="Bulyk M.L."/>
            <person name="Harlow E."/>
            <person name="Marsischky G."/>
            <person name="Kolodner R.D."/>
            <person name="LaBaer J."/>
        </authorList>
    </citation>
    <scope>NUCLEOTIDE SEQUENCE [GENOMIC DNA]</scope>
    <source>
        <strain>ATCC 204508 / S288c</strain>
    </source>
</reference>
<reference key="6">
    <citation type="journal article" date="1999" name="Nature">
        <title>The RCAF complex mediates chromatin assembly during DNA replication and repair.</title>
        <authorList>
            <person name="Tyler J.K."/>
            <person name="Adams C.R."/>
            <person name="Chen S.-R."/>
            <person name="Kobayashi R."/>
            <person name="Kamakaka R.T."/>
            <person name="Kadonaga J.T."/>
        </authorList>
    </citation>
    <scope>FUNCTION</scope>
</reference>
<reference key="7">
    <citation type="journal article" date="2001" name="Curr. Biol.">
        <title>Yeast histone deposition protein Asf1p requires Hir proteins and PCNA for heterochromatic silencing.</title>
        <authorList>
            <person name="Sharp J.A."/>
            <person name="Fouts E.T."/>
            <person name="Krawitz D.C."/>
            <person name="Kaufman P.D."/>
        </authorList>
    </citation>
    <scope>FUNCTION</scope>
    <scope>INTERACTION WITH HISTONE H3; HISTONE H4; HIR1 AND HIR2</scope>
</reference>
<reference key="8">
    <citation type="journal article" date="2001" name="Genes Dev.">
        <title>Asf1 links Rad53 to control of chromatin assembly.</title>
        <authorList>
            <person name="Hu F."/>
            <person name="Alcasabas A.A."/>
            <person name="Elledge S.J."/>
        </authorList>
    </citation>
    <scope>FUNCTION</scope>
    <scope>INTERACTION WITH RAD53</scope>
</reference>
<reference key="9">
    <citation type="journal article" date="2001" name="Genes Dev.">
        <title>The yeast SAS (something about silencing) protein complex contains a MYST-type putative acetyltransferase and functions with chromatin assembly factor ASF1.</title>
        <authorList>
            <person name="Osada S."/>
            <person name="Sutton A."/>
            <person name="Muster N."/>
            <person name="Brown C.E."/>
            <person name="Yates J.R. III"/>
            <person name="Sternglanz R."/>
            <person name="Workman J.L."/>
        </authorList>
    </citation>
    <scope>FUNCTION</scope>
    <scope>INTERACTION WITH SAS2; SAS4 AND SAS5</scope>
</reference>
<reference key="10">
    <citation type="journal article" date="2001" name="Genes Dev.">
        <title>The silencing complex SAS-I links histone acetylation to the assembly of repressed chromatin by CAF-I and Asf1 in Saccharomyces cerevisiae.</title>
        <authorList>
            <person name="Meijsing S.H."/>
            <person name="Ehrenhofer-Murray A.E."/>
        </authorList>
    </citation>
    <scope>FUNCTION</scope>
    <scope>INTERACTION WITH SAS2; SAS4 AND SAS5</scope>
</reference>
<reference key="11">
    <citation type="journal article" date="2001" name="Genetics">
        <title>Yeast ASF1 protein is required for cell cycle regulation of histone gene transcription.</title>
        <authorList>
            <person name="Sutton A."/>
            <person name="Bucaria J."/>
            <person name="Osley M.A."/>
            <person name="Sternglanz R."/>
        </authorList>
    </citation>
    <scope>FUNCTION</scope>
    <scope>INTERACTION WITH HIR1</scope>
    <scope>SUBCELLULAR LOCATION</scope>
</reference>
<reference key="12">
    <citation type="journal article" date="2001" name="Mol. Cell">
        <title>Dynamic interaction of DNA damage checkpoint protein Rad53 with chromatin assembly factor Asf1.</title>
        <authorList>
            <person name="Emili A."/>
            <person name="Schieltz D.M."/>
            <person name="Yates J.R. III"/>
            <person name="Hartwell L.H."/>
        </authorList>
    </citation>
    <scope>FUNCTION</scope>
    <scope>IDENTIFICATION BY MASS SPECTROMETRY</scope>
    <scope>INTERACTION WITH HISTONE H3; HISTONE H4 AND RAD53</scope>
</reference>
<reference key="13">
    <citation type="journal article" date="2002" name="Genes Cells">
        <title>Polyanionic stretch-deleted histone chaperone cia1/Asf1p is functional both in vivo and in vitro.</title>
        <authorList>
            <person name="Umehara T."/>
            <person name="Chimura T."/>
            <person name="Ichikawa N."/>
            <person name="Horikoshi M."/>
        </authorList>
    </citation>
    <scope>FUNCTION</scope>
    <scope>INTERACTION WITH HISTONE H3 AND HISTONE H4</scope>
</reference>
<reference key="14">
    <citation type="journal article" date="2002" name="Mol. Cell. Biol.">
        <title>Chromatin assembly factor I mutants defective for PCNA binding require Asf1/Hir proteins for silencing.</title>
        <authorList>
            <person name="Krawitz D.C."/>
            <person name="Kama T."/>
            <person name="Kaufman P.D."/>
        </authorList>
    </citation>
    <scope>FUNCTION</scope>
    <scope>INTERACTION WITH CAC2; HISTONE H3 AND HISTONE H4</scope>
</reference>
<reference key="15">
    <citation type="journal article" date="2002" name="Proc. Natl. Acad. Sci. U.S.A.">
        <title>Identification and characterization of CIA/ASF1 as an interactor of bromodomains associated with TFIID.</title>
        <authorList>
            <person name="Chimura T."/>
            <person name="Kuzuhara T."/>
            <person name="Horikoshi M."/>
        </authorList>
    </citation>
    <scope>FUNCTION</scope>
    <scope>INTERACTION WITH BDF1; BDF2; SPT15; TAF1 AND TAF7</scope>
</reference>
<reference key="16">
    <citation type="journal article" date="2003" name="Cell Cycle">
        <title>FHA domain-mediated DNA checkpoint regulation of Rad53.</title>
        <authorList>
            <person name="Schwartz M.F."/>
            <person name="Lee S.-J."/>
            <person name="Duong J.K."/>
            <person name="Eminaga S."/>
            <person name="Stern D.F."/>
        </authorList>
    </citation>
    <scope>INTERACTION WITH RAD53</scope>
</reference>
<reference key="17">
    <citation type="journal article" date="2003" name="J. Biol. Chem.">
        <title>Sas4 and Sas5 are required for the histone acetyltransferase activity of Sas2 in the SAS complex.</title>
        <authorList>
            <person name="Sutton A."/>
            <person name="Shia W.-J."/>
            <person name="Band D."/>
            <person name="Kaufman P.D."/>
            <person name="Osada S."/>
            <person name="Workman J.L."/>
            <person name="Sternglanz R."/>
        </authorList>
    </citation>
    <scope>INTERACTION WITH HISTONE H3 AND HISTONE H4</scope>
</reference>
<reference key="18">
    <citation type="journal article" date="2003" name="Mol. Cell. Biol.">
        <title>Rad53 phosphorylation site clusters are important for Rad53 regulation and signaling.</title>
        <authorList>
            <person name="Lee S.-J."/>
            <person name="Schwartz M.F."/>
            <person name="Duong J.K."/>
            <person name="Stern D.F."/>
        </authorList>
    </citation>
    <scope>INTERACTION WITH RAD53</scope>
</reference>
<reference key="19">
    <citation type="journal article" date="2003" name="Mol. Cell. Biol.">
        <title>Replication-independent assembly of nucleosome arrays in a novel yeast chromatin reconstitution system involves antisilencing factor Asf1p and chromodomain protein Chd1p.</title>
        <authorList>
            <person name="Robinson K.M."/>
            <person name="Schultz M.C."/>
        </authorList>
    </citation>
    <scope>FUNCTION</scope>
</reference>
<reference key="20">
    <citation type="journal article" date="2003" name="Nature">
        <title>Global analysis of protein localization in budding yeast.</title>
        <authorList>
            <person name="Huh W.-K."/>
            <person name="Falvo J.V."/>
            <person name="Gerke L.C."/>
            <person name="Carroll A.S."/>
            <person name="Howson R.W."/>
            <person name="Weissman J.S."/>
            <person name="O'Shea E.K."/>
        </authorList>
    </citation>
    <scope>SUBCELLULAR LOCATION [LARGE SCALE ANALYSIS]</scope>
</reference>
<reference key="21">
    <citation type="journal article" date="2003" name="Nature">
        <title>Global analysis of protein expression in yeast.</title>
        <authorList>
            <person name="Ghaemmaghami S."/>
            <person name="Huh W.-K."/>
            <person name="Bower K."/>
            <person name="Howson R.W."/>
            <person name="Belle A."/>
            <person name="Dephoure N."/>
            <person name="O'Shea E.K."/>
            <person name="Weissman J.S."/>
        </authorList>
    </citation>
    <scope>LEVEL OF PROTEIN EXPRESSION [LARGE SCALE ANALYSIS]</scope>
</reference>
<reference key="22">
    <citation type="journal article" date="2004" name="EMBO Rep.">
        <title>The absence of the yeast chromatin assembly factor Asf1 increases genomic instability and sister chromatid exchange.</title>
        <authorList>
            <person name="Prado F."/>
            <person name="Cortes-Ledesma F."/>
            <person name="Aguilera A."/>
        </authorList>
    </citation>
    <scope>FUNCTION</scope>
</reference>
<reference key="23">
    <citation type="journal article" date="2004" name="J. Biol. Chem.">
        <title>The histone chaperone Asf1p mediates global chromatin disassembly in vivo.</title>
        <authorList>
            <person name="Adkins M.W."/>
            <person name="Tyler J.K."/>
        </authorList>
    </citation>
    <scope>FUNCTION</scope>
</reference>
<reference key="24">
    <citation type="journal article" date="2004" name="Mol. Cell">
        <title>Chromatin disassembly mediated by the histone chaperone Asf1 is essential for transcriptional activation of the yeast PHO5 and PHO8 genes.</title>
        <authorList>
            <person name="Adkins M.W."/>
            <person name="Howar S.R."/>
            <person name="Tyler J.K."/>
        </authorList>
    </citation>
    <scope>FUNCTION</scope>
</reference>
<reference key="25">
    <citation type="journal article" date="2004" name="Mol. Cell. Biol.">
        <title>Yeast chromatin assembly complex 1 protein excludes nonacetylatable forms of histone H4 from chromatin and the nucleus.</title>
        <authorList>
            <person name="Glowczewski L."/>
            <person name="Waterborg J.H."/>
            <person name="Berman J.G."/>
        </authorList>
    </citation>
    <scope>FUNCTION</scope>
</reference>
<reference key="26">
    <citation type="journal article" date="2004" name="Mol. Cell. Biol.">
        <title>Activation of the DNA damage checkpoint in yeast lacking the histone chaperone anti-silencing function 1.</title>
        <authorList>
            <person name="Ramey C.J."/>
            <person name="Howar S."/>
            <person name="Adkins M."/>
            <person name="Linger J."/>
            <person name="Spicer J."/>
            <person name="Tyler J.K."/>
        </authorList>
    </citation>
    <scope>FUNCTION</scope>
</reference>
<reference key="27">
    <citation type="journal article" date="2005" name="Biochemistry">
        <title>Gal4-VP16 directs ATP-independent chromatin reorganization in a yeast chromatin assembly system.</title>
        <authorList>
            <person name="Robinson K.M."/>
            <person name="Schultz M.C."/>
        </authorList>
    </citation>
    <scope>FUNCTION</scope>
</reference>
<reference key="28">
    <citation type="journal article" date="2005" name="Curr. Biol.">
        <title>Replication-independent histone deposition by the HIR complex and Asf1.</title>
        <authorList>
            <person name="Green E.M."/>
            <person name="Antczak A.J."/>
            <person name="Bailey A.O."/>
            <person name="Franco A.A."/>
            <person name="Wu K.J."/>
            <person name="Yates J.R. III"/>
            <person name="Kaufman P.D."/>
        </authorList>
    </citation>
    <scope>FUNCTION</scope>
    <scope>INTERACTION WITH HIR1; HIR2; HIR3; HPC2; HISTONE H3; HISTONE H4 AND RAD53</scope>
    <scope>MUTAGENESIS OF 36-HIS-ASP-37</scope>
</reference>
<reference key="29">
    <citation type="journal article" date="2005" name="Eukaryot. Cell">
        <title>Contribution of CAF-I to anaphase-promoting-complex-mediated mitotic chromatin assembly in Saccharomyces cerevisiae.</title>
        <authorList>
            <person name="Harkness T.A.A."/>
            <person name="Arnason T.G."/>
            <person name="Legrand C."/>
            <person name="Pisclevich M.G."/>
            <person name="Davies G.F."/>
            <person name="Turner E.L."/>
        </authorList>
    </citation>
    <scope>FUNCTION</scope>
</reference>
<reference key="30">
    <citation type="journal article" date="2005" name="Genes Dev.">
        <title>Histone deposition protein Asf1 maintains DNA replisome integrity and interacts with replication factor C.</title>
        <authorList>
            <person name="Franco A.A."/>
            <person name="Lam W.M."/>
            <person name="Burgers P.M."/>
            <person name="Kaufman P.D."/>
        </authorList>
    </citation>
    <scope>FUNCTION</scope>
    <scope>INTERACTION WITH RFC1; RFC2; RFC3; RFC4 AND RFC5</scope>
</reference>
<reference key="31">
    <citation type="journal article" date="2005" name="Genetics">
        <title>Regulation of histone deposition proteins Asf1/Hir1 by multiple DNA damage checkpoint kinases in Saccharomyces cerevisiae.</title>
        <authorList>
            <person name="Sharp J.A."/>
            <person name="Rizki G."/>
            <person name="Kaufman P.D."/>
        </authorList>
    </citation>
    <scope>FUNCTION</scope>
    <scope>INTERACTION WITH RAD53</scope>
    <scope>SUBCELLULAR LOCATION</scope>
</reference>
<reference key="32">
    <citation type="journal article" date="2005" name="Genetics">
        <title>The yeast histone chaperone chromatin assembly factor 1 protects against double-strand DNA-damaging agents.</title>
        <authorList>
            <person name="Linger J."/>
            <person name="Tyler J.K."/>
        </authorList>
    </citation>
    <scope>FUNCTION</scope>
</reference>
<reference key="33">
    <citation type="journal article" date="2005" name="Mol. Cell">
        <title>Histones are incorporated in trans during reassembly of the yeast PHO5 promoter.</title>
        <authorList>
            <person name="Schermer U.J."/>
            <person name="Korber P."/>
            <person name="Hoerz W."/>
        </authorList>
    </citation>
    <scope>FUNCTION</scope>
</reference>
<reference key="34">
    <citation type="journal article" date="2005" name="Mol. Cell. Biol.">
        <title>The histone chaperone anti-silencing function 1 is a global regulator of transcription independent of passage through S phase.</title>
        <authorList>
            <person name="Zabaronick S.R."/>
            <person name="Tyler J.K."/>
        </authorList>
    </citation>
    <scope>FUNCTION</scope>
</reference>
<reference key="35">
    <citation type="journal article" date="2005" name="Mol. Cell. Biol.">
        <authorList>
            <person name="Zabaronick S.R."/>
            <person name="Tyler J.K."/>
        </authorList>
    </citation>
    <scope>ERRATUM OF PUBMED:15632066</scope>
</reference>
<reference key="36">
    <citation type="journal article" date="2005" name="Nucleic Acids Res.">
        <title>Chromatin assembly factor Asf1p-dependent occupancy of the SAS histone acetyltransferase complex at the silent mating-type locus HMLalpha.</title>
        <authorList>
            <person name="Osada S."/>
            <person name="Kurita M."/>
            <person name="Nishikawa J."/>
            <person name="Nishihara T."/>
        </authorList>
    </citation>
    <scope>FUNCTION</scope>
</reference>
<reference key="37">
    <citation type="journal article" date="2005" name="Nucleic Acids Res.">
        <title>Reduction of nucleosome assembly during new DNA synthesis impairs both major pathways of double-strand break repair.</title>
        <authorList>
            <person name="Lewis L.K."/>
            <person name="Karthikeyan G."/>
            <person name="Cassiano J."/>
            <person name="Resnick M.A."/>
        </authorList>
    </citation>
    <scope>FUNCTION</scope>
</reference>
<reference key="38">
    <citation type="journal article" date="2005" name="Proc. Natl. Acad. Sci. U.S.A.">
        <title>Structural basis for the interaction of Asf1 with histone H3 and its functional implications.</title>
        <authorList>
            <person name="Mousson F."/>
            <person name="Lautrette A."/>
            <person name="Thuret J.-Y."/>
            <person name="Agez M."/>
            <person name="Courbeyrette R."/>
            <person name="Amigues B."/>
            <person name="Becker E."/>
            <person name="Neumann J.-M."/>
            <person name="Guerois R."/>
            <person name="Mann C."/>
            <person name="Ochsenbein F."/>
        </authorList>
    </citation>
    <scope>FUNCTION</scope>
    <scope>INTERACTION WITH HISTONE H3 AND HISTONE H4</scope>
    <scope>MUTAGENESIS OF ASP-37; GLU-39; ASP-54; VAL-94 AND ARG-108</scope>
</reference>
<reference key="39">
    <citation type="journal article" date="2006" name="Curr. Biol.">
        <title>The sirtuins Hst3 and Hst4p preserve genome integrity by controlling histone H3 lysine 56 deacetylation.</title>
        <authorList>
            <person name="Celic I."/>
            <person name="Masumoto H."/>
            <person name="Griffith W.P."/>
            <person name="Meluh P."/>
            <person name="Cotter R.J."/>
            <person name="Boeke J.D."/>
            <person name="Verreault A."/>
        </authorList>
    </citation>
    <scope>FUNCTION</scope>
</reference>
<reference key="40">
    <citation type="journal article" date="2006" name="Eukaryot. Cell">
        <title>Global replication-independent histone H4 exchange in budding yeast.</title>
        <authorList>
            <person name="Linger J."/>
            <person name="Tyler J.K."/>
        </authorList>
    </citation>
    <scope>FUNCTION</scope>
</reference>
<reference key="41">
    <citation type="journal article" date="2006" name="Genetics">
        <title>Dominant mutants of the Saccharomyces cerevisiae ASF1 histone chaperone bypass the need for CAF-1 in transcriptional silencing by altering histone and Sir protein recruitment.</title>
        <authorList>
            <person name="Tamburini B.A."/>
            <person name="Carson J.J."/>
            <person name="Linger J.G."/>
            <person name="Tyler J.K."/>
        </authorList>
    </citation>
    <scope>FUNCTION</scope>
    <scope>INTERACTION WITH HISTONE H3 AND RAD53</scope>
    <scope>MUTAGENESIS OF VAL-152</scope>
</reference>
<reference key="42">
    <citation type="journal article" date="2006" name="J. Biol. Chem.">
        <title>The histone chaperone Asf1 increases the rate of histone eviction at the yeast PHO5 and PHO8 promoters.</title>
        <authorList>
            <person name="Korber P."/>
            <person name="Barbaric S."/>
            <person name="Luckenbach T."/>
            <person name="Schmid A."/>
            <person name="Schermer U.J."/>
            <person name="Blaschke D."/>
            <person name="Hoerz W."/>
        </authorList>
    </citation>
    <scope>FUNCTION</scope>
</reference>
<reference key="43">
    <citation type="journal article" date="2006" name="J. Biol. Chem.">
        <title>Rtt109 is required for proper H3K56 acetylation: a chromatin mark associated with the elongating RNA polymerase II.</title>
        <authorList>
            <person name="Schneider J."/>
            <person name="Bajwa P."/>
            <person name="Johnson F.C."/>
            <person name="Bhaumik S.R."/>
            <person name="Shilatifard A."/>
        </authorList>
    </citation>
    <scope>FUNCTION</scope>
</reference>
<reference key="44">
    <citation type="journal article" date="2006" name="Mol. Cell">
        <title>Asf1 mediates histone eviction and deposition during elongation by RNA polymerase II.</title>
        <authorList>
            <person name="Schwabish M.A."/>
            <person name="Struhl K."/>
        </authorList>
    </citation>
    <scope>FUNCTION</scope>
</reference>
<reference key="45">
    <citation type="journal article" date="2006" name="Proc. Natl. Acad. Sci. U.S.A.">
        <title>Checkpoint functions are required for normal S-phase progression in Saccharomyces cerevisiae RCAF- and CAF-I-defective mutants.</title>
        <authorList>
            <person name="Kats E.S."/>
            <person name="Albuquerque C.P."/>
            <person name="Zhou H."/>
            <person name="Kolodner R.D."/>
        </authorList>
    </citation>
    <scope>FUNCTION</scope>
</reference>
<reference key="46">
    <citation type="journal article" date="2006" name="Proc. Natl. Acad. Sci. U.S.A.">
        <title>Histone chaperone Asf1 is required for histone H3 lysine 56 acetylation, a modification associated with S phase in mitosis and meiosis.</title>
        <authorList>
            <person name="Recht J."/>
            <person name="Tsubota T."/>
            <person name="Tanny J.C."/>
            <person name="Diaz R.L."/>
            <person name="Berger J.M."/>
            <person name="Zhang X."/>
            <person name="Garcia B.A."/>
            <person name="Shabanowitz J."/>
            <person name="Burlingame A.L."/>
            <person name="Hunt D.F."/>
            <person name="Kaufman P.D."/>
            <person name="Allis C.D."/>
        </authorList>
    </citation>
    <scope>FUNCTION</scope>
    <scope>MUTAGENESIS OF VAL-45; 53-HIS-ASP-54; VAL-94; LEU-96; TYR-112; ARG-145 AND THR-147</scope>
</reference>
<reference key="47">
    <citation type="journal article" date="2007" name="J. Biol. Chem.">
        <title>The histone chaperone anti-silencing function 1 stimulates the acetylation of newly synthesized histone H3 in S-phase.</title>
        <authorList>
            <person name="Adkins M.W."/>
            <person name="Carson J.J."/>
            <person name="English C.M."/>
            <person name="Ramey C.J."/>
            <person name="Tyler J.K."/>
        </authorList>
    </citation>
    <scope>FUNCTION</scope>
    <scope>MUTAGENESIS OF SER-48; VAL-94; TYR-112; ARG-145 AND THR-147</scope>
</reference>
<reference key="48">
    <citation type="journal article" date="2007" name="J. Proteome Res.">
        <title>Large-scale phosphorylation analysis of alpha-factor-arrested Saccharomyces cerevisiae.</title>
        <authorList>
            <person name="Li X."/>
            <person name="Gerber S.A."/>
            <person name="Rudner A.D."/>
            <person name="Beausoleil S.A."/>
            <person name="Haas W."/>
            <person name="Villen J."/>
            <person name="Elias J.E."/>
            <person name="Gygi S.P."/>
        </authorList>
    </citation>
    <scope>IDENTIFICATION BY MASS SPECTROMETRY [LARGE SCALE ANALYSIS]</scope>
    <source>
        <strain>ADR376</strain>
    </source>
</reference>
<reference key="49">
    <citation type="journal article" date="2007" name="Mol. Cell">
        <title>Histone H3-K56 acetylation is catalyzed by histone chaperone-dependent complexes.</title>
        <authorList>
            <person name="Tsubota T."/>
            <person name="Berndsen C.E."/>
            <person name="Erkmann J.A."/>
            <person name="Smith C.L."/>
            <person name="Yang L."/>
            <person name="Freitas M.A."/>
            <person name="Denu J.M."/>
            <person name="Kaufman P.D."/>
        </authorList>
    </citation>
    <scope>FUNCTION</scope>
    <scope>INTERACTION WITH RTT109</scope>
</reference>
<reference key="50">
    <citation type="journal article" date="2008" name="Mol. Cell. Proteomics">
        <title>A multidimensional chromatography technology for in-depth phosphoproteome analysis.</title>
        <authorList>
            <person name="Albuquerque C.P."/>
            <person name="Smolka M.B."/>
            <person name="Payne S.H."/>
            <person name="Bafna V."/>
            <person name="Eng J."/>
            <person name="Zhou H."/>
        </authorList>
    </citation>
    <scope>IDENTIFICATION BY MASS SPECTROMETRY [LARGE SCALE ANALYSIS]</scope>
</reference>
<reference key="51">
    <citation type="journal article" date="2009" name="Science">
        <title>Global analysis of Cdk1 substrate phosphorylation sites provides insights into evolution.</title>
        <authorList>
            <person name="Holt L.J."/>
            <person name="Tuch B.B."/>
            <person name="Villen J."/>
            <person name="Johnson A.D."/>
            <person name="Gygi S.P."/>
            <person name="Morgan D.O."/>
        </authorList>
    </citation>
    <scope>IDENTIFICATION BY MASS SPECTROMETRY [LARGE SCALE ANALYSIS]</scope>
</reference>
<reference key="52">
    <citation type="journal article" date="2011" name="Structure">
        <title>Structure of the Rtt109-AcCoA/Vps75 complex and implications for chaperone-mediated histone acetylation.</title>
        <authorList>
            <person name="Tang Y."/>
            <person name="Holbert M.A."/>
            <person name="Delgoshaie N."/>
            <person name="Wurtele H."/>
            <person name="Guillemette B."/>
            <person name="Meeth K."/>
            <person name="Yuan H."/>
            <person name="Drogaris P."/>
            <person name="Lee E.H."/>
            <person name="Durette C."/>
            <person name="Thibault P."/>
            <person name="Verreault A."/>
            <person name="Cole P.A."/>
            <person name="Marmorstein R."/>
        </authorList>
    </citation>
    <scope>FUNCTION</scope>
</reference>
<reference key="53">
    <citation type="journal article" date="2016" name="Nucleic Acids Res.">
        <title>The histone chaperone Vps75 forms multiple oligomeric assemblies capable of mediating exchange between histone H3-H4 tetramers and Asf1-H3-H4 complexes.</title>
        <authorList>
            <person name="Hammond C.M."/>
            <person name="Sundaramoorthy R."/>
            <person name="Larance M."/>
            <person name="Lamond A."/>
            <person name="Stevens M.A."/>
            <person name="El-Mkami H."/>
            <person name="Norman D.G."/>
            <person name="Owen-Hughes T."/>
        </authorList>
    </citation>
    <scope>INTERACTION WITH HISTONE H3/H4 HETERODIMERS</scope>
</reference>
<reference key="54">
    <citation type="journal article" date="2019" name="Nucleic Acids Res.">
        <title>Two factor authentication: Asf1 mediates crosstalk between H3 K14 and K56 acetylation.</title>
        <authorList>
            <person name="Cote J.M."/>
            <person name="Kuo Y.M."/>
            <person name="Henry R.A."/>
            <person name="Scherman H."/>
            <person name="Krzizike D.D."/>
            <person name="Andrews A.J."/>
        </authorList>
    </citation>
    <scope>FUNCTION</scope>
    <scope>INTERACTION WITH HISTONE H3/H4 HETERODIMERS</scope>
    <scope>MUTAGENESIS OF GLU-105</scope>
</reference>
<reference key="55">
    <citation type="journal article" date="2003" name="Curr. Biol.">
        <title>Structure and function of the conserved core of histone deposition protein Asf1.</title>
        <authorList>
            <person name="Daganzo S.M."/>
            <person name="Erzberger J.P."/>
            <person name="Lam W.M."/>
            <person name="Skordalakes E."/>
            <person name="Zhang R."/>
            <person name="Franco A.A."/>
            <person name="Brill S.J."/>
            <person name="Adams P.D."/>
            <person name="Berger J.M."/>
            <person name="Kaufman P.D."/>
        </authorList>
    </citation>
    <scope>X-RAY CRYSTALLOGRAPHY (1.5 ANGSTROMS) OF 2-154</scope>
    <scope>FUNCTION</scope>
    <scope>INTERACTION WITH HISTONE H3; HISTONE H4 AND RAD53</scope>
    <scope>MUTAGENESIS OF 36-HIS-ASP-37</scope>
</reference>
<reference key="56">
    <citation type="journal article" date="2005" name="J. Biochem.">
        <title>Structural similarity between histone chaperone Cia1p/Asf1p and DNA-binding protein NF-kappaB.</title>
        <authorList>
            <person name="Padmanabhan B."/>
            <person name="Kataoka K."/>
            <person name="Umehara T."/>
            <person name="Adachi N."/>
            <person name="Yokoyama S."/>
            <person name="Horikoshi M."/>
        </authorList>
    </citation>
    <scope>X-RAY CRYSTALLOGRAPHY (3.0 ANGSTROMS) OF 1-169</scope>
</reference>
<reference key="57">
    <citation type="journal article" date="2006" name="Cell">
        <title>Structural basis for the histone chaperone activity of Asf1.</title>
        <authorList>
            <person name="English C.M."/>
            <person name="Adkins M.W."/>
            <person name="Carson J.J."/>
            <person name="Churchill M.E.A."/>
            <person name="Tyler J.K."/>
        </authorList>
    </citation>
    <scope>X-RAY CRYSTALLOGRAPHY (1.7 ANGSTROMS) OF 2-169 IN COMPLEX WITH THE HISTONE H3/H4 HETERODIMER</scope>
    <scope>MUTAGENESIS OF LEU-6; SER-48; VAL-94; VAL-109; TYR-112; ARG-145; VAL-146 AND THR-147</scope>
</reference>
<reference evidence="57" key="58">
    <citation type="journal article" date="2018" name="Nucleic Acids Res.">
        <title>Structural characterization of the Asf1-Rtt109 interaction and its role in histone acetylation.</title>
        <authorList>
            <person name="Lercher L."/>
            <person name="Danilenko N."/>
            <person name="Kirkpatrick J."/>
            <person name="Carlomagno T."/>
        </authorList>
    </citation>
    <scope>STRUCTURE BY NMR OF 2-169</scope>
    <scope>INTERACTION WITH RTT109 AND HISTONE H3/H4 HETERODIMERS</scope>
</reference>
<reference evidence="58" key="59">
    <citation type="journal article" date="2019" name="Nat. Commun.">
        <title>Histone chaperone exploits intrinsic disorder to switch acetylation specificity.</title>
        <authorList>
            <person name="Danilenko N."/>
            <person name="Lercher L."/>
            <person name="Kirkpatrick J."/>
            <person name="Gabel F."/>
            <person name="Codutti L."/>
            <person name="Carlomagno T."/>
        </authorList>
    </citation>
    <scope>STRUCTURE BY NMR IN COMPLEX WITH RTT109 AND VPS75</scope>
    <scope>INTERACTION WITH RTT109; VPS75 AND H3/H4 HETERODIMERS</scope>
</reference>
<comment type="function">
    <text evidence="3 4 5 6 7 8 9 10 11 12 18 19 20 21 22 23 24 25 26 27 28 29 30 31 32 33 34 35 36 37 38 39 40 41 42 43 45 46 47 50">Histone chaperone that facilitates histone deposition and histone exchange and removal during nucleosome assembly and disassembly (PubMed:11172707, PubMed:11331602, PubMed:11404324, PubMed:11856374, PubMed:14680630, PubMed:15071494, PubMed:15175160, PubMed:15452122, PubMed:15542829, PubMed:15766286, PubMed:15891116, PubMed:16039596, PubMed:16303565, PubMed:16407267, PubMed:16678113, PubMed:16936140). Facilitates histone deposition through both replication-dependent and replication-independent chromatin assembly pathways (PubMed:14585955, PubMed:15632066, PubMed:16678113). Cooperates with chromatin assembly factor 1 (CAF-1) to promote replication-dependent chromatin assembly and with the HIR complex to promote replication-independent chromatin assembly, which may occur during transcription and DNA repair (PubMed:10591219, PubMed:11404324, PubMed:11412995, PubMed:11731479, PubMed:11731480, PubMed:11756556, PubMed:12093919, PubMed:15542840, PubMed:15821127, PubMed:16020781, PubMed:16141196, PubMed:16143623, PubMed:16303565, PubMed:16501045, PubMed:16582440). May be required for the maintenance of a subset of replication elongation factors, including DNA polymerase epsilon, the RFC complex and PCNA, at stalled replication forks (PubMed:11412995, PubMed:15901673). Also required for RTT109-dependent acetylation of histone H3 on 'Lys-9' and 'Lys-56' (PubMed:15840725, PubMed:16627621, PubMed:16815704, PubMed:17046836, PubMed:17107956, PubMed:17320445, PubMed:21256037). Promotion of RTT109-mediated histone H3 'Lys-56' acetylation is dependent on interactions with histone H3 pre-acetylated on 'Lys-14' (PubMed:31194870).</text>
</comment>
<comment type="subunit">
    <text evidence="4 5 6 7 8 9 10 11 12 13 14 15 19 28 30 31 35 38 44 46 48 49 50 51">Interacts with histone H3/H4 heterodimers via both histone H3 and histone H4 (PubMed:11172707, PubMed:11412995, PubMed:11756556, PubMed:11856374, PubMed:12626510, PubMed:14680630, PubMed:15840725, PubMed:16303565, PubMed:16582440, PubMed:17081973, PubMed:27036862, PubMed:29300933, PubMed:31387991). Binds with higher affinity to H3/H4 heterodimers where histone H3 has been pre-acetylated on 'Lys-14' (PubMed:31194870). Interacts with RAD53 and this may impair interaction with histones and chromatin assembly; the interaction is reduced upon activation of DNA damage or replication checkpoints which in turn promotes histone binding and chromatin assembly (PubMed:11331602, PubMed:12851493, PubMed:12917350, PubMed:14680630, PubMed:16020781, PubMed:16303565). Interacts with the CAC2 subunit of chromatin assembly factor 1 (CAF-1) (PubMed:11756556). Interacts with the HIR1, HIR2, HIR3 and HPC2 subunits of the HIR complex (PubMed:11404324, PubMed:11412995, PubMed:16303565). Interacts with the RFC1, RFC2, RFC3, RFC4 and RFC5 subunits of the replication factor C (RF-C/RFC) complex; which may recruit this protein to DNA (PubMed:15901673). Interacts with the SAS2, SAS4 and SAS5 subunits of the SAS/SAS-I complex (PubMed:11731479, PubMed:11731480). Interacts with the BDF1, BDF2, SPT15, TAF1 and TAF7 subunits of the TFIID complex (PubMed:12093919). Interacts with RTT109 and VPS75; the interaction with RTT109 is direct (PubMed:17320445, PubMed:29300933, PubMed:31387991).</text>
</comment>
<comment type="interaction">
    <interactant intactId="EBI-3003">
        <id>P32447</id>
    </interactant>
    <interactant intactId="EBI-8113">
        <id>P02309</id>
        <label>HHF2</label>
    </interactant>
    <organismsDiffer>false</organismsDiffer>
    <experiments>7</experiments>
</comment>
<comment type="interaction">
    <interactant intactId="EBI-3003">
        <id>P32447</id>
    </interactant>
    <interactant intactId="EBI-8098">
        <id>P61830</id>
        <label>HHT2</label>
    </interactant>
    <organismsDiffer>false</organismsDiffer>
    <experiments>4</experiments>
</comment>
<comment type="interaction">
    <interactant intactId="EBI-3003">
        <id>P32447</id>
    </interactant>
    <interactant intactId="EBI-8316">
        <id>P32479</id>
        <label>HIR1</label>
    </interactant>
    <organismsDiffer>false</organismsDiffer>
    <experiments>7</experiments>
</comment>
<comment type="interaction">
    <interactant intactId="EBI-3003">
        <id>P32447</id>
    </interactant>
    <interactant intactId="EBI-17843">
        <id>P22216</id>
        <label>RAD53</label>
    </interactant>
    <organismsDiffer>false</organismsDiffer>
    <experiments>11</experiments>
</comment>
<comment type="interaction">
    <interactant intactId="EBI-3003">
        <id>P32447</id>
    </interactant>
    <interactant intactId="EBI-29119">
        <id>P40161</id>
        <label>RTT106</label>
    </interactant>
    <organismsDiffer>false</organismsDiffer>
    <experiments>5</experiments>
</comment>
<comment type="interaction">
    <interactant intactId="EBI-3003">
        <id>P32447</id>
    </interactant>
    <interactant intactId="EBI-16476">
        <id>P40963</id>
        <label>SAS2</label>
    </interactant>
    <organismsDiffer>false</organismsDiffer>
    <experiments>4</experiments>
</comment>
<comment type="interaction">
    <interactant intactId="EBI-3003">
        <id>P32447</id>
    </interactant>
    <interactant intactId="EBI-38500">
        <id>Q04003</id>
        <label>SAS4</label>
    </interactant>
    <organismsDiffer>false</organismsDiffer>
    <experiments>5</experiments>
</comment>
<comment type="subcellular location">
    <subcellularLocation>
        <location evidence="6 16 31">Nucleus</location>
    </subcellularLocation>
</comment>
<comment type="developmental stage">
    <text evidence="52">Expression peaks in S-phase (at the RNA level).</text>
</comment>
<comment type="miscellaneous">
    <text evidence="17">Present with 6230 molecules/cell in log phase SD medium.</text>
</comment>
<comment type="similarity">
    <text evidence="55">Belongs to the ASF1 family.</text>
</comment>
<gene>
    <name evidence="54" type="primary">ASF1</name>
    <name evidence="53" type="synonym">CIA1</name>
    <name evidence="56" type="ordered locus">YJL115W</name>
    <name type="ORF">J0755</name>
</gene>
<protein>
    <recommendedName>
        <fullName>Histone chaperone ASF1</fullName>
    </recommendedName>
    <alternativeName>
        <fullName>Anti-silencing function protein 1</fullName>
        <shortName>yASF1</shortName>
    </alternativeName>
</protein>
<keyword id="KW-0002">3D-structure</keyword>
<keyword id="KW-0143">Chaperone</keyword>
<keyword id="KW-0156">Chromatin regulator</keyword>
<keyword id="KW-0175">Coiled coil</keyword>
<keyword id="KW-0539">Nucleus</keyword>
<keyword id="KW-1185">Reference proteome</keyword>
<keyword id="KW-0804">Transcription</keyword>
<keyword id="KW-0805">Transcription regulation</keyword>
<sequence>MSIVSLLGIKVLNNPAKFTDPYEFEITFECLESLKHDLEWKLTYVGSSRSLDHDQELDSILVGPVPVGVNKFVFSADPPSAELIPASELVSVTVILLSCSYDGREFVRVGYYVNNEYDEEELRENPPAKVQVDHIVRNILAEKPRVTRFNIVWDNENEGDLYPPEQPGVDDEEEEDDEEEDDDEDDEDDEDDDQEDGEGEAEEAAEEEEEEEEKTEDNETNLEEEEEDIENSDGDEEEGEEEVGSVDKNEDGNDKKRRKIEGGSTDIESTPKDAARSTN</sequence>
<dbReference type="EMBL" id="L07593">
    <property type="protein sequence ID" value="AAC37512.1"/>
    <property type="molecule type" value="Genomic_DNA"/>
</dbReference>
<dbReference type="EMBL" id="Z49390">
    <property type="protein sequence ID" value="CAA89410.1"/>
    <property type="molecule type" value="Genomic_DNA"/>
</dbReference>
<dbReference type="EMBL" id="AY557874">
    <property type="protein sequence ID" value="AAS56200.1"/>
    <property type="molecule type" value="Genomic_DNA"/>
</dbReference>
<dbReference type="EMBL" id="BK006943">
    <property type="protein sequence ID" value="DAA08685.1"/>
    <property type="molecule type" value="Genomic_DNA"/>
</dbReference>
<dbReference type="PIR" id="S30766">
    <property type="entry name" value="S30766"/>
</dbReference>
<dbReference type="RefSeq" id="NP_012420.1">
    <property type="nucleotide sequence ID" value="NM_001181548.1"/>
</dbReference>
<dbReference type="PDB" id="1ROC">
    <property type="method" value="X-ray"/>
    <property type="resolution" value="1.50 A"/>
    <property type="chains" value="A=2-154"/>
</dbReference>
<dbReference type="PDB" id="1WG3">
    <property type="method" value="X-ray"/>
    <property type="resolution" value="3.00 A"/>
    <property type="chains" value="A=1-169"/>
</dbReference>
<dbReference type="PDB" id="2HUE">
    <property type="method" value="X-ray"/>
    <property type="resolution" value="1.70 A"/>
    <property type="chains" value="A=2-169"/>
</dbReference>
<dbReference type="PDB" id="2IDC">
    <property type="method" value="X-ray"/>
    <property type="resolution" value="2.20 A"/>
    <property type="chains" value="A=2-155"/>
</dbReference>
<dbReference type="PDB" id="2YGV">
    <property type="method" value="X-ray"/>
    <property type="resolution" value="2.94 A"/>
    <property type="chains" value="A/B/C/D=1-156"/>
</dbReference>
<dbReference type="PDB" id="4EO5">
    <property type="method" value="X-ray"/>
    <property type="resolution" value="2.35 A"/>
    <property type="chains" value="A=2-169"/>
</dbReference>
<dbReference type="PDB" id="4ZBJ">
    <property type="method" value="X-ray"/>
    <property type="resolution" value="2.25 A"/>
    <property type="chains" value="A=2-169"/>
</dbReference>
<dbReference type="PDB" id="5EII">
    <property type="method" value="X-ray"/>
    <property type="resolution" value="2.44 A"/>
    <property type="chains" value="G/I=1-156"/>
</dbReference>
<dbReference type="PDB" id="5UCB">
    <property type="method" value="X-ray"/>
    <property type="resolution" value="1.52 A"/>
    <property type="chains" value="B=2-154"/>
</dbReference>
<dbReference type="PDB" id="5UEA">
    <property type="method" value="X-ray"/>
    <property type="resolution" value="1.70 A"/>
    <property type="chains" value="D/X=2-154"/>
</dbReference>
<dbReference type="PDB" id="5UEK">
    <property type="method" value="X-ray"/>
    <property type="resolution" value="1.70 A"/>
    <property type="chains" value="A=2-154"/>
</dbReference>
<dbReference type="PDB" id="6AYZ">
    <property type="method" value="X-ray"/>
    <property type="resolution" value="2.10 A"/>
    <property type="chains" value="A/M=2-154"/>
</dbReference>
<dbReference type="PDB" id="6AZ2">
    <property type="method" value="X-ray"/>
    <property type="resolution" value="2.48 A"/>
    <property type="chains" value="B/D=2-154"/>
</dbReference>
<dbReference type="PDB" id="6F0Y">
    <property type="method" value="NMR"/>
    <property type="chains" value="A=2-169"/>
</dbReference>
<dbReference type="PDB" id="6O22">
    <property type="method" value="Other"/>
    <property type="chains" value="D=2-279"/>
</dbReference>
<dbReference type="PDB" id="7UNK">
    <property type="method" value="EM"/>
    <property type="resolution" value="3.45 A"/>
    <property type="chains" value="D=1-279"/>
</dbReference>
<dbReference type="PDB" id="8GHM">
    <property type="method" value="EM"/>
    <property type="resolution" value="12.00 A"/>
    <property type="chains" value="O=1-279"/>
</dbReference>
<dbReference type="PDB" id="8GHN">
    <property type="method" value="EM"/>
    <property type="resolution" value="2.96 A"/>
    <property type="chains" value="O=1-279"/>
</dbReference>
<dbReference type="PDB" id="9AVO">
    <property type="method" value="X-ray"/>
    <property type="resolution" value="3.00 A"/>
    <property type="chains" value="A=2-159"/>
</dbReference>
<dbReference type="PDB" id="9AWE">
    <property type="method" value="X-ray"/>
    <property type="resolution" value="2.80 A"/>
    <property type="chains" value="A=2-159"/>
</dbReference>
<dbReference type="PDBsum" id="1ROC"/>
<dbReference type="PDBsum" id="1WG3"/>
<dbReference type="PDBsum" id="2HUE"/>
<dbReference type="PDBsum" id="2IDC"/>
<dbReference type="PDBsum" id="2YGV"/>
<dbReference type="PDBsum" id="4EO5"/>
<dbReference type="PDBsum" id="4ZBJ"/>
<dbReference type="PDBsum" id="5EII"/>
<dbReference type="PDBsum" id="5UCB"/>
<dbReference type="PDBsum" id="5UEA"/>
<dbReference type="PDBsum" id="5UEK"/>
<dbReference type="PDBsum" id="6AYZ"/>
<dbReference type="PDBsum" id="6AZ2"/>
<dbReference type="PDBsum" id="6F0Y"/>
<dbReference type="PDBsum" id="6O22"/>
<dbReference type="PDBsum" id="7UNK"/>
<dbReference type="PDBsum" id="8GHM"/>
<dbReference type="PDBsum" id="8GHN"/>
<dbReference type="PDBsum" id="9AVO"/>
<dbReference type="PDBsum" id="9AWE"/>
<dbReference type="SASBDB" id="P32447"/>
<dbReference type="SMR" id="P32447"/>
<dbReference type="BioGRID" id="33639">
    <property type="interactions" value="665"/>
</dbReference>
<dbReference type="ComplexPortal" id="CPX-1322">
    <property type="entry name" value="RAD53-ASF1 complex"/>
</dbReference>
<dbReference type="DIP" id="DIP-2675N"/>
<dbReference type="FunCoup" id="P32447">
    <property type="interactions" value="1063"/>
</dbReference>
<dbReference type="IntAct" id="P32447">
    <property type="interactions" value="135"/>
</dbReference>
<dbReference type="MINT" id="P32447"/>
<dbReference type="STRING" id="4932.YJL115W"/>
<dbReference type="iPTMnet" id="P32447"/>
<dbReference type="PaxDb" id="4932-YJL115W"/>
<dbReference type="PeptideAtlas" id="P32447"/>
<dbReference type="ABCD" id="P32447">
    <property type="antibodies" value="6 sequenced antibodies"/>
</dbReference>
<dbReference type="EnsemblFungi" id="YJL115W_mRNA">
    <property type="protein sequence ID" value="YJL115W"/>
    <property type="gene ID" value="YJL115W"/>
</dbReference>
<dbReference type="GeneID" id="853327"/>
<dbReference type="KEGG" id="sce:YJL115W"/>
<dbReference type="AGR" id="SGD:S000003651"/>
<dbReference type="SGD" id="S000003651">
    <property type="gene designation" value="ASF1"/>
</dbReference>
<dbReference type="VEuPathDB" id="FungiDB:YJL115W"/>
<dbReference type="eggNOG" id="KOG3265">
    <property type="taxonomic scope" value="Eukaryota"/>
</dbReference>
<dbReference type="GeneTree" id="ENSGT00390000004692"/>
<dbReference type="HOGENOM" id="CLU_060354_0_2_1"/>
<dbReference type="InParanoid" id="P32447"/>
<dbReference type="OMA" id="CSYDERE"/>
<dbReference type="OrthoDB" id="29755at2759"/>
<dbReference type="BioCyc" id="YEAST:G3O-31569-MONOMER"/>
<dbReference type="Reactome" id="R-SCE-2559584">
    <property type="pathway name" value="Formation of Senescence-Associated Heterochromatin Foci (SAHF)"/>
</dbReference>
<dbReference type="BioGRID-ORCS" id="853327">
    <property type="hits" value="0 hits in 10 CRISPR screens"/>
</dbReference>
<dbReference type="EvolutionaryTrace" id="P32447"/>
<dbReference type="PRO" id="PR:P32447"/>
<dbReference type="Proteomes" id="UP000002311">
    <property type="component" value="Chromosome X"/>
</dbReference>
<dbReference type="RNAct" id="P32447">
    <property type="molecule type" value="protein"/>
</dbReference>
<dbReference type="GO" id="GO:0000785">
    <property type="term" value="C:chromatin"/>
    <property type="evidence" value="ECO:0000318"/>
    <property type="project" value="GO_Central"/>
</dbReference>
<dbReference type="GO" id="GO:0000781">
    <property type="term" value="C:chromosome, telomeric region"/>
    <property type="evidence" value="ECO:0007669"/>
    <property type="project" value="GOC"/>
</dbReference>
<dbReference type="GO" id="GO:0005829">
    <property type="term" value="C:cytosol"/>
    <property type="evidence" value="ECO:0000314"/>
    <property type="project" value="SGD"/>
</dbReference>
<dbReference type="GO" id="GO:0070775">
    <property type="term" value="C:H3 histone acetyltransferase complex"/>
    <property type="evidence" value="ECO:0000314"/>
    <property type="project" value="UniProtKB"/>
</dbReference>
<dbReference type="GO" id="GO:0005634">
    <property type="term" value="C:nucleus"/>
    <property type="evidence" value="ECO:0000314"/>
    <property type="project" value="SGD"/>
</dbReference>
<dbReference type="GO" id="GO:0010698">
    <property type="term" value="F:acetyltransferase activator activity"/>
    <property type="evidence" value="ECO:0000314"/>
    <property type="project" value="UniProtKB"/>
</dbReference>
<dbReference type="GO" id="GO:0042393">
    <property type="term" value="F:histone binding"/>
    <property type="evidence" value="ECO:0000314"/>
    <property type="project" value="UniProtKB"/>
</dbReference>
<dbReference type="GO" id="GO:0033554">
    <property type="term" value="P:cellular response to stress"/>
    <property type="evidence" value="ECO:0000315"/>
    <property type="project" value="SGD"/>
</dbReference>
<dbReference type="GO" id="GO:0006325">
    <property type="term" value="P:chromatin organization"/>
    <property type="evidence" value="ECO:0000314"/>
    <property type="project" value="SGD"/>
</dbReference>
<dbReference type="GO" id="GO:0006335">
    <property type="term" value="P:DNA replication-dependent chromatin assembly"/>
    <property type="evidence" value="ECO:0000314"/>
    <property type="project" value="SGD"/>
</dbReference>
<dbReference type="GO" id="GO:2000002">
    <property type="term" value="P:negative regulation of DNA damage checkpoint"/>
    <property type="evidence" value="ECO:0000303"/>
    <property type="project" value="ComplexPortal"/>
</dbReference>
<dbReference type="GO" id="GO:0006334">
    <property type="term" value="P:nucleosome assembly"/>
    <property type="evidence" value="ECO:0007669"/>
    <property type="project" value="InterPro"/>
</dbReference>
<dbReference type="GO" id="GO:0006337">
    <property type="term" value="P:nucleosome disassembly"/>
    <property type="evidence" value="ECO:0000315"/>
    <property type="project" value="SGD"/>
</dbReference>
<dbReference type="GO" id="GO:0032968">
    <property type="term" value="P:positive regulation of transcription elongation by RNA polymerase II"/>
    <property type="evidence" value="ECO:0000314"/>
    <property type="project" value="SGD"/>
</dbReference>
<dbReference type="GO" id="GO:0036211">
    <property type="term" value="P:protein modification process"/>
    <property type="evidence" value="ECO:0000314"/>
    <property type="project" value="UniProtKB"/>
</dbReference>
<dbReference type="GO" id="GO:0006282">
    <property type="term" value="P:regulation of DNA repair"/>
    <property type="evidence" value="ECO:0000303"/>
    <property type="project" value="ComplexPortal"/>
</dbReference>
<dbReference type="GO" id="GO:0010468">
    <property type="term" value="P:regulation of gene expression"/>
    <property type="evidence" value="ECO:0000315"/>
    <property type="project" value="SGD"/>
</dbReference>
<dbReference type="GO" id="GO:0006357">
    <property type="term" value="P:regulation of transcription by RNA polymerase II"/>
    <property type="evidence" value="ECO:0000315"/>
    <property type="project" value="SGD"/>
</dbReference>
<dbReference type="GO" id="GO:0030466">
    <property type="term" value="P:silent mating-type cassette heterochromatin formation"/>
    <property type="evidence" value="ECO:0000316"/>
    <property type="project" value="SGD"/>
</dbReference>
<dbReference type="GO" id="GO:0031509">
    <property type="term" value="P:subtelomeric heterochromatin formation"/>
    <property type="evidence" value="ECO:0000316"/>
    <property type="project" value="SGD"/>
</dbReference>
<dbReference type="FunFam" id="2.60.40.1490:FF:000001">
    <property type="entry name" value="Histone chaperone ASF1"/>
    <property type="match status" value="1"/>
</dbReference>
<dbReference type="Gene3D" id="2.60.40.1490">
    <property type="entry name" value="Histone chaperone ASF1-like"/>
    <property type="match status" value="1"/>
</dbReference>
<dbReference type="IDEAL" id="IID50170"/>
<dbReference type="InterPro" id="IPR006818">
    <property type="entry name" value="ASF1-like"/>
</dbReference>
<dbReference type="InterPro" id="IPR036747">
    <property type="entry name" value="ASF1-like_sf"/>
</dbReference>
<dbReference type="InterPro" id="IPR017282">
    <property type="entry name" value="Hist_deposition_Asf1"/>
</dbReference>
<dbReference type="PANTHER" id="PTHR12040">
    <property type="entry name" value="ANTI-SILENCING PROTEIN 1"/>
    <property type="match status" value="1"/>
</dbReference>
<dbReference type="PANTHER" id="PTHR12040:SF0">
    <property type="entry name" value="HISTONE CHAPERONE ASF1"/>
    <property type="match status" value="1"/>
</dbReference>
<dbReference type="Pfam" id="PF04729">
    <property type="entry name" value="ASF1_hist_chap"/>
    <property type="match status" value="1"/>
</dbReference>
<dbReference type="PIRSF" id="PIRSF037759">
    <property type="entry name" value="Histone_Asf1"/>
    <property type="match status" value="1"/>
</dbReference>
<dbReference type="SUPFAM" id="SSF101546">
    <property type="entry name" value="ASF1-like"/>
    <property type="match status" value="1"/>
</dbReference>
<name>ASF1_YEAST</name>
<feature type="chain" id="PRO_0000064695" description="Histone chaperone ASF1">
    <location>
        <begin position="1"/>
        <end position="279"/>
    </location>
</feature>
<feature type="region of interest" description="Interaction with histone H3, histone H4, RAD53 and the RF-C complex">
    <location>
        <begin position="1"/>
        <end position="155"/>
    </location>
</feature>
<feature type="region of interest" description="Interaction with HIR1">
    <location>
        <begin position="1"/>
        <end position="143"/>
    </location>
</feature>
<feature type="region of interest" description="Disordered" evidence="2">
    <location>
        <begin position="156"/>
        <end position="279"/>
    </location>
</feature>
<feature type="coiled-coil region" evidence="1">
    <location>
        <begin position="192"/>
        <end position="243"/>
    </location>
</feature>
<feature type="compositionally biased region" description="Acidic residues" evidence="2">
    <location>
        <begin position="168"/>
        <end position="244"/>
    </location>
</feature>
<feature type="compositionally biased region" description="Basic and acidic residues" evidence="2">
    <location>
        <begin position="245"/>
        <end position="254"/>
    </location>
</feature>
<feature type="compositionally biased region" description="Basic and acidic residues" evidence="2">
    <location>
        <begin position="269"/>
        <end position="279"/>
    </location>
</feature>
<feature type="mutagenesis site" description="Enhances transcriptional silencing." evidence="44">
    <original>L</original>
    <variation>M</variation>
    <location>
        <position position="6"/>
    </location>
</feature>
<feature type="mutagenesis site" description="Abrogates stimulation of replication-independent chromatin assembly by the HIR complex and abrogates telomeric silencing." evidence="19 35">
    <original>HD</original>
    <variation>AA</variation>
    <location>
        <begin position="36"/>
        <end position="37"/>
    </location>
</feature>
<feature type="mutagenesis site" description="Reduces transcriptional silencing; when associated with R-39." evidence="28">
    <original>D</original>
    <variation>R</variation>
    <location>
        <position position="37"/>
    </location>
</feature>
<feature type="mutagenesis site" description="Reduces transcriptional silencing; when associated with R-37." evidence="28">
    <original>E</original>
    <variation>R</variation>
    <location>
        <position position="39"/>
    </location>
</feature>
<feature type="mutagenesis site" description="Reduces acetylation of histone H3 on 'K-56' and enhances sensitivity to camptothecin." evidence="39">
    <original>V</original>
    <variation>D</variation>
    <location>
        <position position="45"/>
    </location>
</feature>
<feature type="mutagenesis site" description="Abrogates interaction with histone H3 and histone H4 and enhances transcriptional silencing. Reduces acetylation of histone H3 on 'K-9' and 'K-56'; when associated with E-145 or E-147." evidence="44 45">
    <original>S</original>
    <variation>R</variation>
    <location>
        <position position="48"/>
    </location>
</feature>
<feature type="mutagenesis site" description="Reduces acetylation of histone H3 on 'K-56' and enhances sensitivity to camptothecin." evidence="39">
    <original>HD</original>
    <variation>AA</variation>
    <location>
        <begin position="53"/>
        <end position="54"/>
    </location>
</feature>
<feature type="mutagenesis site" description="Reduces transcriptional silencing." evidence="28">
    <original>D</original>
    <variation>R</variation>
    <location>
        <position position="54"/>
    </location>
</feature>
<feature type="mutagenesis site" description="Reduces acetylation of histone H3 on 'K-56' and enhances sensitivity to bleomycin, camptothecin, HU and MMS; when associated with D-96." evidence="28 39 44 45">
    <original>V</original>
    <variation>D</variation>
    <location>
        <position position="94"/>
    </location>
</feature>
<feature type="mutagenesis site" description="Abrogates interaction with histone H3 and histone H4, abrogates transcriptional silencing, reduces acetylation of histone H3 on 'K-9' and 'K-56' and enhances sensitivity to HU and MMS." evidence="28 39 44 45">
    <original>V</original>
    <variation>R</variation>
    <location>
        <position position="94"/>
    </location>
</feature>
<feature type="mutagenesis site" description="Reduces acetylation of histone H3 on 'K-56' and enhances sensitivity to bleomycin, camptothecin, HU and MMS; when associated with D-94." evidence="39">
    <original>L</original>
    <variation>D</variation>
    <location>
        <position position="96"/>
    </location>
</feature>
<feature type="mutagenesis site" description="Decreases histone H3/H4 binding affinity." evidence="50">
    <original>E</original>
    <variation>A</variation>
    <location>
        <position position="105"/>
    </location>
</feature>
<feature type="mutagenesis site" description="Reduces transcriptional silencing." evidence="28">
    <original>R</original>
    <variation>E</variation>
    <location>
        <position position="108"/>
    </location>
</feature>
<feature type="mutagenesis site" description="Reduces interaction with histone H3 and histone H4, enhances transcriptional silencing and reduces transcriptional activation." evidence="44">
    <original>V</original>
    <variation>M</variation>
    <location>
        <position position="109"/>
    </location>
</feature>
<feature type="mutagenesis site" description="Abrogates interaction with histone H3 and histone H4 and enhances transcriptional silencing. Abrogates transcriptional silencing, reduces transcriptional activation, reduces acetylation of histone H3 on 'K-9' and 'K-56' and enhances sensitivity to HU and MMS; when associated with E-145 or E-147." evidence="39 44 45">
    <original>Y</original>
    <variation>A</variation>
    <location>
        <position position="112"/>
    </location>
</feature>
<feature type="mutagenesis site" description="Reduces acetylation of histone H3 on 'K-56' and enhances sensitivity to bleomycin, camptothecin, HU and MMS." evidence="39 44 45">
    <original>Y</original>
    <variation>E</variation>
    <location>
        <position position="112"/>
    </location>
</feature>
<feature type="mutagenesis site" description="Reduces acetylation of histone H3 on 'K-56' and enhances sensitivity to bleomycin, camptothecin, HU and MMS; when associated with A-147." evidence="39 44 45">
    <original>R</original>
    <variation>A</variation>
    <location>
        <position position="145"/>
    </location>
</feature>
<feature type="mutagenesis site" description="Abrogates interaction with histone H3 and histone H4, abrogates transcriptional silencing, reduces transcriptional activation, reduces acetylation of histone H3 on 'K-9' and 'K-56' and enhances sensitivity to HU and MMS; when associated with R-48; E-112 or E-147." evidence="39 44 45">
    <original>R</original>
    <variation>E</variation>
    <location>
        <position position="145"/>
    </location>
</feature>
<feature type="mutagenesis site" description="Reduces interaction with histone H3 and histone H4, enhances transcriptional silencing and reduces transcriptional activation." evidence="44">
    <original>V</original>
    <variation>L</variation>
    <location>
        <position position="146"/>
    </location>
</feature>
<feature type="mutagenesis site" description="Reduces acetylation of histone H3 on 'K-56' and enhances sensitivity to bleomycin, camptothecin, HU and MMS; when associated with A-145." evidence="39 44 45">
    <original>T</original>
    <variation>A</variation>
    <location>
        <position position="147"/>
    </location>
</feature>
<feature type="mutagenesis site" description="Enhances transcriptional silencing. Abrogates interaction with histone H3 and histone H4, abrogates transcriptional silencing, reduces transcriptional activation, reduces acetylation of histone H3 on 'K-9' and 'K-56' and enhances sensitivity to HU and MMS; when associated with R-48; A-112 or E-145." evidence="39 44 45">
    <original>T</original>
    <variation>E</variation>
    <location>
        <position position="147"/>
    </location>
</feature>
<feature type="mutagenesis site" description="Impairs interaction with histone H3 and RAD53 and enhances silencing at telomeres and mating-type loci." evidence="38">
    <original>V</original>
    <variation>VVFLHY</variation>
    <location>
        <position position="152"/>
    </location>
</feature>
<feature type="strand" evidence="59">
    <location>
        <begin position="3"/>
        <end position="11"/>
    </location>
</feature>
<feature type="strand" evidence="59">
    <location>
        <begin position="15"/>
        <end position="17"/>
    </location>
</feature>
<feature type="strand" evidence="59">
    <location>
        <begin position="22"/>
        <end position="30"/>
    </location>
</feature>
<feature type="strand" evidence="61">
    <location>
        <begin position="34"/>
        <end position="36"/>
    </location>
</feature>
<feature type="strand" evidence="59">
    <location>
        <begin position="38"/>
        <end position="44"/>
    </location>
</feature>
<feature type="turn" evidence="62">
    <location>
        <begin position="47"/>
        <end position="49"/>
    </location>
</feature>
<feature type="helix" evidence="60">
    <location>
        <begin position="51"/>
        <end position="53"/>
    </location>
</feature>
<feature type="strand" evidence="59">
    <location>
        <begin position="55"/>
        <end position="62"/>
    </location>
</feature>
<feature type="strand" evidence="59">
    <location>
        <begin position="67"/>
        <end position="76"/>
    </location>
</feature>
<feature type="helix" evidence="59">
    <location>
        <begin position="81"/>
        <end position="83"/>
    </location>
</feature>
<feature type="helix" evidence="59">
    <location>
        <begin position="87"/>
        <end position="90"/>
    </location>
</feature>
<feature type="strand" evidence="59">
    <location>
        <begin position="93"/>
        <end position="101"/>
    </location>
</feature>
<feature type="strand" evidence="59">
    <location>
        <begin position="104"/>
        <end position="119"/>
    </location>
</feature>
<feature type="helix" evidence="59">
    <location>
        <begin position="120"/>
        <end position="124"/>
    </location>
</feature>
<feature type="helix" evidence="59">
    <location>
        <begin position="132"/>
        <end position="134"/>
    </location>
</feature>
<feature type="strand" evidence="59">
    <location>
        <begin position="135"/>
        <end position="139"/>
    </location>
</feature>
<feature type="strand" evidence="59">
    <location>
        <begin position="145"/>
        <end position="148"/>
    </location>
</feature>
<feature type="turn" evidence="60">
    <location>
        <begin position="155"/>
        <end position="157"/>
    </location>
</feature>
<organism>
    <name type="scientific">Saccharomyces cerevisiae (strain ATCC 204508 / S288c)</name>
    <name type="common">Baker's yeast</name>
    <dbReference type="NCBI Taxonomy" id="559292"/>
    <lineage>
        <taxon>Eukaryota</taxon>
        <taxon>Fungi</taxon>
        <taxon>Dikarya</taxon>
        <taxon>Ascomycota</taxon>
        <taxon>Saccharomycotina</taxon>
        <taxon>Saccharomycetes</taxon>
        <taxon>Saccharomycetales</taxon>
        <taxon>Saccharomycetaceae</taxon>
        <taxon>Saccharomyces</taxon>
    </lineage>
</organism>
<evidence type="ECO:0000255" key="1"/>
<evidence type="ECO:0000256" key="2">
    <source>
        <dbReference type="SAM" id="MobiDB-lite"/>
    </source>
</evidence>
<evidence type="ECO:0000269" key="3">
    <source>
    </source>
</evidence>
<evidence type="ECO:0000269" key="4">
    <source>
    </source>
</evidence>
<evidence type="ECO:0000269" key="5">
    <source>
    </source>
</evidence>
<evidence type="ECO:0000269" key="6">
    <source>
    </source>
</evidence>
<evidence type="ECO:0000269" key="7">
    <source>
    </source>
</evidence>
<evidence type="ECO:0000269" key="8">
    <source>
    </source>
</evidence>
<evidence type="ECO:0000269" key="9">
    <source>
    </source>
</evidence>
<evidence type="ECO:0000269" key="10">
    <source>
    </source>
</evidence>
<evidence type="ECO:0000269" key="11">
    <source>
    </source>
</evidence>
<evidence type="ECO:0000269" key="12">
    <source>
    </source>
</evidence>
<evidence type="ECO:0000269" key="13">
    <source>
    </source>
</evidence>
<evidence type="ECO:0000269" key="14">
    <source>
    </source>
</evidence>
<evidence type="ECO:0000269" key="15">
    <source>
    </source>
</evidence>
<evidence type="ECO:0000269" key="16">
    <source>
    </source>
</evidence>
<evidence type="ECO:0000269" key="17">
    <source>
    </source>
</evidence>
<evidence type="ECO:0000269" key="18">
    <source>
    </source>
</evidence>
<evidence type="ECO:0000269" key="19">
    <source>
    </source>
</evidence>
<evidence type="ECO:0000269" key="20">
    <source>
    </source>
</evidence>
<evidence type="ECO:0000269" key="21">
    <source>
    </source>
</evidence>
<evidence type="ECO:0000269" key="22">
    <source>
    </source>
</evidence>
<evidence type="ECO:0000269" key="23">
    <source>
    </source>
</evidence>
<evidence type="ECO:0000269" key="24">
    <source>
    </source>
</evidence>
<evidence type="ECO:0000269" key="25">
    <source>
    </source>
</evidence>
<evidence type="ECO:0000269" key="26">
    <source>
    </source>
</evidence>
<evidence type="ECO:0000269" key="27">
    <source>
    </source>
</evidence>
<evidence type="ECO:0000269" key="28">
    <source>
    </source>
</evidence>
<evidence type="ECO:0000269" key="29">
    <source>
    </source>
</evidence>
<evidence type="ECO:0000269" key="30">
    <source>
    </source>
</evidence>
<evidence type="ECO:0000269" key="31">
    <source>
    </source>
</evidence>
<evidence type="ECO:0000269" key="32">
    <source>
    </source>
</evidence>
<evidence type="ECO:0000269" key="33">
    <source>
    </source>
</evidence>
<evidence type="ECO:0000269" key="34">
    <source>
    </source>
</evidence>
<evidence type="ECO:0000269" key="35">
    <source>
    </source>
</evidence>
<evidence type="ECO:0000269" key="36">
    <source>
    </source>
</evidence>
<evidence type="ECO:0000269" key="37">
    <source>
    </source>
</evidence>
<evidence type="ECO:0000269" key="38">
    <source>
    </source>
</evidence>
<evidence type="ECO:0000269" key="39">
    <source>
    </source>
</evidence>
<evidence type="ECO:0000269" key="40">
    <source>
    </source>
</evidence>
<evidence type="ECO:0000269" key="41">
    <source>
    </source>
</evidence>
<evidence type="ECO:0000269" key="42">
    <source>
    </source>
</evidence>
<evidence type="ECO:0000269" key="43">
    <source>
    </source>
</evidence>
<evidence type="ECO:0000269" key="44">
    <source>
    </source>
</evidence>
<evidence type="ECO:0000269" key="45">
    <source>
    </source>
</evidence>
<evidence type="ECO:0000269" key="46">
    <source>
    </source>
</evidence>
<evidence type="ECO:0000269" key="47">
    <source>
    </source>
</evidence>
<evidence type="ECO:0000269" key="48">
    <source>
    </source>
</evidence>
<evidence type="ECO:0000269" key="49">
    <source>
    </source>
</evidence>
<evidence type="ECO:0000269" key="50">
    <source>
    </source>
</evidence>
<evidence type="ECO:0000269" key="51">
    <source>
    </source>
</evidence>
<evidence type="ECO:0000269" key="52">
    <source>
    </source>
</evidence>
<evidence type="ECO:0000303" key="53">
    <source>
    </source>
</evidence>
<evidence type="ECO:0000303" key="54">
    <source>
    </source>
</evidence>
<evidence type="ECO:0000305" key="55"/>
<evidence type="ECO:0000312" key="56">
    <source>
        <dbReference type="SGD" id="S000003651"/>
    </source>
</evidence>
<evidence type="ECO:0007744" key="57">
    <source>
        <dbReference type="PDB" id="6F0Y"/>
    </source>
</evidence>
<evidence type="ECO:0007744" key="58">
    <source>
        <dbReference type="PDB" id="6O22"/>
    </source>
</evidence>
<evidence type="ECO:0007829" key="59">
    <source>
        <dbReference type="PDB" id="1ROC"/>
    </source>
</evidence>
<evidence type="ECO:0007829" key="60">
    <source>
        <dbReference type="PDB" id="2HUE"/>
    </source>
</evidence>
<evidence type="ECO:0007829" key="61">
    <source>
        <dbReference type="PDB" id="6AYZ"/>
    </source>
</evidence>
<evidence type="ECO:0007829" key="62">
    <source>
        <dbReference type="PDB" id="6F0Y"/>
    </source>
</evidence>